<evidence type="ECO:0000255" key="1">
    <source>
        <dbReference type="HAMAP-Rule" id="MF_00271"/>
    </source>
</evidence>
<organism>
    <name type="scientific">Coprothermobacter proteolyticus (strain ATCC 35245 / DSM 5265 / OCM 4 / BT)</name>
    <dbReference type="NCBI Taxonomy" id="309798"/>
    <lineage>
        <taxon>Bacteria</taxon>
        <taxon>Pseudomonadati</taxon>
        <taxon>Coprothermobacterota</taxon>
        <taxon>Coprothermobacteria</taxon>
        <taxon>Coprothermobacterales</taxon>
        <taxon>Coprothermobacteraceae</taxon>
        <taxon>Coprothermobacter</taxon>
    </lineage>
</organism>
<feature type="chain" id="PRO_1000114480" description="V-type ATP synthase subunit D">
    <location>
        <begin position="1"/>
        <end position="210"/>
    </location>
</feature>
<name>VATD_COPPD</name>
<accession>B5Y8B7</accession>
<proteinExistence type="inferred from homology"/>
<keyword id="KW-0066">ATP synthesis</keyword>
<keyword id="KW-0375">Hydrogen ion transport</keyword>
<keyword id="KW-0406">Ion transport</keyword>
<keyword id="KW-1185">Reference proteome</keyword>
<keyword id="KW-0813">Transport</keyword>
<sequence length="210" mass="24982">MASTVSPNRMTLLALKRRYTISKRGLKLLKDKLEAMVKAFRDLYTEFDRERRYIEELMEAFVELLNQYESETSPAVRDRIRSMQLFQVEYELSTRMVFNIKVPFLDVSLKRMDIPDLYLQTGPAFYKALSVYEELLPHLLKLASLRNALHMMSVEIEKTRRRSNALEYNVVPELERTIKWVQQYLDEMERSQTVRIMKVKSMLEKERGNA</sequence>
<gene>
    <name evidence="1" type="primary">atpD</name>
    <name type="ordered locus">COPRO5265_0666</name>
</gene>
<comment type="function">
    <text evidence="1">Produces ATP from ADP in the presence of a proton gradient across the membrane.</text>
</comment>
<comment type="similarity">
    <text evidence="1">Belongs to the V-ATPase D subunit family.</text>
</comment>
<protein>
    <recommendedName>
        <fullName evidence="1">V-type ATP synthase subunit D</fullName>
    </recommendedName>
    <alternativeName>
        <fullName evidence="1">V-ATPase subunit D</fullName>
    </alternativeName>
</protein>
<dbReference type="EMBL" id="CP001145">
    <property type="protein sequence ID" value="ACI17806.1"/>
    <property type="molecule type" value="Genomic_DNA"/>
</dbReference>
<dbReference type="RefSeq" id="WP_012544458.1">
    <property type="nucleotide sequence ID" value="NC_011295.1"/>
</dbReference>
<dbReference type="SMR" id="B5Y8B7"/>
<dbReference type="STRING" id="309798.COPRO5265_0666"/>
<dbReference type="KEGG" id="cpo:COPRO5265_0666"/>
<dbReference type="eggNOG" id="COG1394">
    <property type="taxonomic scope" value="Bacteria"/>
</dbReference>
<dbReference type="HOGENOM" id="CLU_069688_2_1_9"/>
<dbReference type="OrthoDB" id="9781718at2"/>
<dbReference type="Proteomes" id="UP000001732">
    <property type="component" value="Chromosome"/>
</dbReference>
<dbReference type="GO" id="GO:0005524">
    <property type="term" value="F:ATP binding"/>
    <property type="evidence" value="ECO:0007669"/>
    <property type="project" value="UniProtKB-UniRule"/>
</dbReference>
<dbReference type="GO" id="GO:0046933">
    <property type="term" value="F:proton-transporting ATP synthase activity, rotational mechanism"/>
    <property type="evidence" value="ECO:0007669"/>
    <property type="project" value="UniProtKB-UniRule"/>
</dbReference>
<dbReference type="GO" id="GO:0046961">
    <property type="term" value="F:proton-transporting ATPase activity, rotational mechanism"/>
    <property type="evidence" value="ECO:0007669"/>
    <property type="project" value="InterPro"/>
</dbReference>
<dbReference type="GO" id="GO:0042777">
    <property type="term" value="P:proton motive force-driven plasma membrane ATP synthesis"/>
    <property type="evidence" value="ECO:0007669"/>
    <property type="project" value="UniProtKB-UniRule"/>
</dbReference>
<dbReference type="Gene3D" id="1.10.287.3240">
    <property type="match status" value="1"/>
</dbReference>
<dbReference type="HAMAP" id="MF_00271">
    <property type="entry name" value="ATP_synth_D_arch"/>
    <property type="match status" value="1"/>
</dbReference>
<dbReference type="InterPro" id="IPR002699">
    <property type="entry name" value="V_ATPase_D"/>
</dbReference>
<dbReference type="NCBIfam" id="TIGR00309">
    <property type="entry name" value="V_ATPase_subD"/>
    <property type="match status" value="1"/>
</dbReference>
<dbReference type="PANTHER" id="PTHR11671">
    <property type="entry name" value="V-TYPE ATP SYNTHASE SUBUNIT D"/>
    <property type="match status" value="1"/>
</dbReference>
<dbReference type="Pfam" id="PF01813">
    <property type="entry name" value="ATP-synt_D"/>
    <property type="match status" value="1"/>
</dbReference>
<reference key="1">
    <citation type="submission" date="2008-08" db="EMBL/GenBank/DDBJ databases">
        <title>The complete genome sequence of Coprothermobacter proteolyticus strain ATCC 5245 / DSM 5265 / BT.</title>
        <authorList>
            <person name="Dodson R.J."/>
            <person name="Durkin A.S."/>
            <person name="Wu M."/>
            <person name="Eisen J."/>
            <person name="Sutton G."/>
        </authorList>
    </citation>
    <scope>NUCLEOTIDE SEQUENCE [LARGE SCALE GENOMIC DNA]</scope>
    <source>
        <strain>ATCC 35245 / DSM 5265 / OCM 4 / BT</strain>
    </source>
</reference>